<name>MS116_PHANO</name>
<organism>
    <name type="scientific">Phaeosphaeria nodorum (strain SN15 / ATCC MYA-4574 / FGSC 10173)</name>
    <name type="common">Glume blotch fungus</name>
    <name type="synonym">Parastagonospora nodorum</name>
    <dbReference type="NCBI Taxonomy" id="321614"/>
    <lineage>
        <taxon>Eukaryota</taxon>
        <taxon>Fungi</taxon>
        <taxon>Dikarya</taxon>
        <taxon>Ascomycota</taxon>
        <taxon>Pezizomycotina</taxon>
        <taxon>Dothideomycetes</taxon>
        <taxon>Pleosporomycetidae</taxon>
        <taxon>Pleosporales</taxon>
        <taxon>Pleosporineae</taxon>
        <taxon>Phaeosphaeriaceae</taxon>
        <taxon>Parastagonospora</taxon>
    </lineage>
</organism>
<proteinExistence type="inferred from homology"/>
<comment type="function">
    <text evidence="1">ATP-dependent RNA helicase required for mitochondrial splicing of group I and II introns. Also required for efficient mitochondrial translation (By similarity).</text>
</comment>
<comment type="catalytic activity">
    <reaction>
        <text>ATP + H2O = ADP + phosphate + H(+)</text>
        <dbReference type="Rhea" id="RHEA:13065"/>
        <dbReference type="ChEBI" id="CHEBI:15377"/>
        <dbReference type="ChEBI" id="CHEBI:15378"/>
        <dbReference type="ChEBI" id="CHEBI:30616"/>
        <dbReference type="ChEBI" id="CHEBI:43474"/>
        <dbReference type="ChEBI" id="CHEBI:456216"/>
        <dbReference type="EC" id="3.6.4.13"/>
    </reaction>
</comment>
<comment type="subcellular location">
    <subcellularLocation>
        <location evidence="1">Mitochondrion matrix</location>
    </subcellularLocation>
</comment>
<comment type="domain">
    <text>The Q motif is unique to and characteristic of the DEAD box family of RNA helicases and controls ATP binding and hydrolysis.</text>
</comment>
<comment type="similarity">
    <text evidence="6">Belongs to the DEAD box helicase family. DDX18/HAS1 subfamily.</text>
</comment>
<gene>
    <name type="primary">MSS116</name>
    <name type="ORF">SNOG_09314</name>
</gene>
<evidence type="ECO:0000250" key="1"/>
<evidence type="ECO:0000255" key="2"/>
<evidence type="ECO:0000255" key="3">
    <source>
        <dbReference type="PROSITE-ProRule" id="PRU00541"/>
    </source>
</evidence>
<evidence type="ECO:0000255" key="4">
    <source>
        <dbReference type="PROSITE-ProRule" id="PRU00542"/>
    </source>
</evidence>
<evidence type="ECO:0000256" key="5">
    <source>
        <dbReference type="SAM" id="MobiDB-lite"/>
    </source>
</evidence>
<evidence type="ECO:0000305" key="6"/>
<accession>Q0UG00</accession>
<sequence>MPPPPKRKWPNRPRGGGGANGSASGTPTTPRSTVAQQPKRPKVEDAAPAAEGVDVKQMYSTSAGNASAKPFSELSSVLDKSLLDGLDKMGFEFMSPVQQKVLTELPSLSSDCVVQAKTGTGKTVAFLLPAIQNLLAGNMPPRGKVAILVVCPTRELALQIAKECNGVTACLPRKMECHTAFGGTSRASNLKAFLNGNPTILVATPGRLDDILGEEHVRERFTHLKTVVLDEADQMLDAGFAPAVKKILRRIPPKSDGWQGMCFSATLPKEVLDIAKIVLFPGFTHLTTVDPNEVPTHERVPQYFLSVPNVGQTFAALSALIQEEHKQDPTDFKAIVFGTTANGVGLLYDLYKHALPQFRVFELHSRMSQPMRTRTTAQFKEATSGILFASDVVGRGMDFPNVGLVVQLGLPSSTEQYVHRVGRTARAGKDGRAVLVLFEKEAFFPRINRTLPIKPYPVDIAAKVPEQEAAITRAFANVEEEAKAKAYQAFLGYNKTFLKKLQLSTTELVRVANEYSRAMGCPEPPLIEKSTIGKMGLKGVPGLNIGSRRH</sequence>
<protein>
    <recommendedName>
        <fullName>ATP-dependent RNA helicase MSS116, mitochondrial</fullName>
        <ecNumber>3.6.4.13</ecNumber>
    </recommendedName>
</protein>
<feature type="transit peptide" description="Mitochondrion" evidence="2">
    <location>
        <begin position="1"/>
        <end position="41"/>
    </location>
</feature>
<feature type="chain" id="PRO_0000256012" description="ATP-dependent RNA helicase MSS116, mitochondrial">
    <location>
        <begin position="42"/>
        <end position="550"/>
    </location>
</feature>
<feature type="domain" description="Helicase ATP-binding" evidence="3">
    <location>
        <begin position="103"/>
        <end position="285"/>
    </location>
</feature>
<feature type="domain" description="Helicase C-terminal" evidence="4">
    <location>
        <begin position="316"/>
        <end position="472"/>
    </location>
</feature>
<feature type="region of interest" description="Disordered" evidence="5">
    <location>
        <begin position="1"/>
        <end position="51"/>
    </location>
</feature>
<feature type="short sequence motif" description="Q motif">
    <location>
        <begin position="71"/>
        <end position="99"/>
    </location>
</feature>
<feature type="short sequence motif" description="DEAD box">
    <location>
        <begin position="230"/>
        <end position="233"/>
    </location>
</feature>
<feature type="compositionally biased region" description="Basic residues" evidence="5">
    <location>
        <begin position="1"/>
        <end position="11"/>
    </location>
</feature>
<feature type="binding site" evidence="3">
    <location>
        <begin position="116"/>
        <end position="123"/>
    </location>
    <ligand>
        <name>ATP</name>
        <dbReference type="ChEBI" id="CHEBI:30616"/>
    </ligand>
</feature>
<reference key="1">
    <citation type="journal article" date="2007" name="Plant Cell">
        <title>Dothideomycete-plant interactions illuminated by genome sequencing and EST analysis of the wheat pathogen Stagonospora nodorum.</title>
        <authorList>
            <person name="Hane J.K."/>
            <person name="Lowe R.G.T."/>
            <person name="Solomon P.S."/>
            <person name="Tan K.-C."/>
            <person name="Schoch C.L."/>
            <person name="Spatafora J.W."/>
            <person name="Crous P.W."/>
            <person name="Kodira C.D."/>
            <person name="Birren B.W."/>
            <person name="Galagan J.E."/>
            <person name="Torriani S.F.F."/>
            <person name="McDonald B.A."/>
            <person name="Oliver R.P."/>
        </authorList>
    </citation>
    <scope>NUCLEOTIDE SEQUENCE [LARGE SCALE GENOMIC DNA]</scope>
    <source>
        <strain>SN15 / ATCC MYA-4574 / FGSC 10173</strain>
    </source>
</reference>
<keyword id="KW-0067">ATP-binding</keyword>
<keyword id="KW-0347">Helicase</keyword>
<keyword id="KW-0378">Hydrolase</keyword>
<keyword id="KW-0496">Mitochondrion</keyword>
<keyword id="KW-0507">mRNA processing</keyword>
<keyword id="KW-0508">mRNA splicing</keyword>
<keyword id="KW-0547">Nucleotide-binding</keyword>
<keyword id="KW-0694">RNA-binding</keyword>
<keyword id="KW-0809">Transit peptide</keyword>
<keyword id="KW-0810">Translation regulation</keyword>
<dbReference type="EC" id="3.6.4.13"/>
<dbReference type="EMBL" id="CH445338">
    <property type="protein sequence ID" value="EAT83506.1"/>
    <property type="molecule type" value="Genomic_DNA"/>
</dbReference>
<dbReference type="RefSeq" id="XP_001799609.1">
    <property type="nucleotide sequence ID" value="XM_001799557.1"/>
</dbReference>
<dbReference type="SMR" id="Q0UG00"/>
<dbReference type="FunCoup" id="Q0UG00">
    <property type="interactions" value="176"/>
</dbReference>
<dbReference type="STRING" id="321614.Q0UG00"/>
<dbReference type="EnsemblFungi" id="SNOT_09314">
    <property type="protein sequence ID" value="SNOT_09314"/>
    <property type="gene ID" value="SNOG_09314"/>
</dbReference>
<dbReference type="GeneID" id="5976510"/>
<dbReference type="KEGG" id="pno:SNOG_09314"/>
<dbReference type="VEuPathDB" id="FungiDB:JI435_093140"/>
<dbReference type="eggNOG" id="KOG0342">
    <property type="taxonomic scope" value="Eukaryota"/>
</dbReference>
<dbReference type="HOGENOM" id="CLU_003041_26_6_1"/>
<dbReference type="InParanoid" id="Q0UG00"/>
<dbReference type="OMA" id="NGEQYVH"/>
<dbReference type="OrthoDB" id="193716at2759"/>
<dbReference type="Proteomes" id="UP000001055">
    <property type="component" value="Unassembled WGS sequence"/>
</dbReference>
<dbReference type="GO" id="GO:0005759">
    <property type="term" value="C:mitochondrial matrix"/>
    <property type="evidence" value="ECO:0007669"/>
    <property type="project" value="UniProtKB-SubCell"/>
</dbReference>
<dbReference type="GO" id="GO:0005739">
    <property type="term" value="C:mitochondrion"/>
    <property type="evidence" value="ECO:0000318"/>
    <property type="project" value="GO_Central"/>
</dbReference>
<dbReference type="GO" id="GO:0005524">
    <property type="term" value="F:ATP binding"/>
    <property type="evidence" value="ECO:0007669"/>
    <property type="project" value="UniProtKB-KW"/>
</dbReference>
<dbReference type="GO" id="GO:0016887">
    <property type="term" value="F:ATP hydrolysis activity"/>
    <property type="evidence" value="ECO:0007669"/>
    <property type="project" value="RHEA"/>
</dbReference>
<dbReference type="GO" id="GO:0003723">
    <property type="term" value="F:RNA binding"/>
    <property type="evidence" value="ECO:0007669"/>
    <property type="project" value="UniProtKB-KW"/>
</dbReference>
<dbReference type="GO" id="GO:0003724">
    <property type="term" value="F:RNA helicase activity"/>
    <property type="evidence" value="ECO:0007669"/>
    <property type="project" value="UniProtKB-EC"/>
</dbReference>
<dbReference type="GO" id="GO:0006397">
    <property type="term" value="P:mRNA processing"/>
    <property type="evidence" value="ECO:0007669"/>
    <property type="project" value="UniProtKB-KW"/>
</dbReference>
<dbReference type="GO" id="GO:0006417">
    <property type="term" value="P:regulation of translation"/>
    <property type="evidence" value="ECO:0007669"/>
    <property type="project" value="UniProtKB-KW"/>
</dbReference>
<dbReference type="GO" id="GO:0008380">
    <property type="term" value="P:RNA splicing"/>
    <property type="evidence" value="ECO:0007669"/>
    <property type="project" value="UniProtKB-KW"/>
</dbReference>
<dbReference type="CDD" id="cd17964">
    <property type="entry name" value="DEADc_MSS116"/>
    <property type="match status" value="1"/>
</dbReference>
<dbReference type="CDD" id="cd18787">
    <property type="entry name" value="SF2_C_DEAD"/>
    <property type="match status" value="1"/>
</dbReference>
<dbReference type="Gene3D" id="3.40.50.300">
    <property type="entry name" value="P-loop containing nucleotide triphosphate hydrolases"/>
    <property type="match status" value="2"/>
</dbReference>
<dbReference type="InterPro" id="IPR011545">
    <property type="entry name" value="DEAD/DEAH_box_helicase_dom"/>
</dbReference>
<dbReference type="InterPro" id="IPR014001">
    <property type="entry name" value="Helicase_ATP-bd"/>
</dbReference>
<dbReference type="InterPro" id="IPR001650">
    <property type="entry name" value="Helicase_C-like"/>
</dbReference>
<dbReference type="InterPro" id="IPR027417">
    <property type="entry name" value="P-loop_NTPase"/>
</dbReference>
<dbReference type="PANTHER" id="PTHR24031">
    <property type="entry name" value="RNA HELICASE"/>
    <property type="match status" value="1"/>
</dbReference>
<dbReference type="Pfam" id="PF00270">
    <property type="entry name" value="DEAD"/>
    <property type="match status" value="1"/>
</dbReference>
<dbReference type="Pfam" id="PF00271">
    <property type="entry name" value="Helicase_C"/>
    <property type="match status" value="1"/>
</dbReference>
<dbReference type="SMART" id="SM00487">
    <property type="entry name" value="DEXDc"/>
    <property type="match status" value="1"/>
</dbReference>
<dbReference type="SMART" id="SM00490">
    <property type="entry name" value="HELICc"/>
    <property type="match status" value="1"/>
</dbReference>
<dbReference type="SUPFAM" id="SSF52540">
    <property type="entry name" value="P-loop containing nucleoside triphosphate hydrolases"/>
    <property type="match status" value="1"/>
</dbReference>
<dbReference type="PROSITE" id="PS51192">
    <property type="entry name" value="HELICASE_ATP_BIND_1"/>
    <property type="match status" value="1"/>
</dbReference>
<dbReference type="PROSITE" id="PS51194">
    <property type="entry name" value="HELICASE_CTER"/>
    <property type="match status" value="1"/>
</dbReference>
<dbReference type="PROSITE" id="PS51195">
    <property type="entry name" value="Q_MOTIF"/>
    <property type="match status" value="1"/>
</dbReference>